<organism evidence="5">
    <name type="scientific">Caenorhabditis elegans</name>
    <dbReference type="NCBI Taxonomy" id="6239"/>
    <lineage>
        <taxon>Eukaryota</taxon>
        <taxon>Metazoa</taxon>
        <taxon>Ecdysozoa</taxon>
        <taxon>Nematoda</taxon>
        <taxon>Chromadorea</taxon>
        <taxon>Rhabditida</taxon>
        <taxon>Rhabditina</taxon>
        <taxon>Rhabditomorpha</taxon>
        <taxon>Rhabditoidea</taxon>
        <taxon>Rhabditidae</taxon>
        <taxon>Peloderinae</taxon>
        <taxon>Caenorhabditis</taxon>
    </lineage>
</organism>
<keyword id="KW-0025">Alternative splicing</keyword>
<keyword id="KW-0067">ATP-binding</keyword>
<keyword id="KW-0963">Cytoplasm</keyword>
<keyword id="KW-0418">Kinase</keyword>
<keyword id="KW-0547">Nucleotide-binding</keyword>
<keyword id="KW-0539">Nucleus</keyword>
<keyword id="KW-1185">Reference proteome</keyword>
<keyword id="KW-0723">Serine/threonine-protein kinase</keyword>
<keyword id="KW-0808">Transferase</keyword>
<keyword id="KW-0829">Tyrosine-protein kinase</keyword>
<gene>
    <name evidence="6" type="primary">madd-3</name>
    <name evidence="6" type="synonym">tag-172</name>
    <name evidence="6" type="ORF">E02H4.3</name>
</gene>
<reference evidence="5" key="1">
    <citation type="journal article" date="1998" name="Science">
        <title>Genome sequence of the nematode C. elegans: a platform for investigating biology.</title>
        <authorList>
            <consortium name="The C. elegans sequencing consortium"/>
        </authorList>
    </citation>
    <scope>NUCLEOTIDE SEQUENCE [LARGE SCALE GENOMIC DNA]</scope>
    <source>
        <strain evidence="5">Bristol N2</strain>
    </source>
</reference>
<reference evidence="4" key="2">
    <citation type="journal article" date="2016" name="PLoS Genet.">
        <title>The MADD-3 LAMMER kinase interacts with a p38 MAP kinase pathway to regulate the display of the EVA-1 guidance receptor in Caenorhabditis elegans.</title>
        <authorList>
            <person name="D'Souza S.A."/>
            <person name="Rajendran L."/>
            <person name="Bagg R."/>
            <person name="Barbier L."/>
            <person name="van Pel D.M."/>
            <person name="Moshiri H."/>
            <person name="Roy P.J."/>
        </authorList>
    </citation>
    <scope>FUNCTION (ISOFORM A)</scope>
    <scope>SUBCELLULAR LOCATION (ISOFORM A)</scope>
    <scope>TISSUE SPECIFICITY (ISOFORM A)</scope>
    <scope>DEVELOPMENTAL STAGE (ISOFORM A)</scope>
    <scope>DISRUPTION PHENOTYPE</scope>
    <scope>MUTAGENESIS OF LYS-580</scope>
</reference>
<name>MADD3_CAEEL</name>
<protein>
    <recommendedName>
        <fullName evidence="4">Probable dual specificity protein kinase madd-3</fullName>
        <ecNumber evidence="1">2.7.11.-</ecNumber>
    </recommendedName>
    <alternativeName>
        <fullName evidence="6">Muscle arm development defective protein 3</fullName>
    </alternativeName>
</protein>
<accession>G5EDB2</accession>
<accession>G5EGK0</accession>
<evidence type="ECO:0000255" key="1">
    <source>
        <dbReference type="PROSITE-ProRule" id="PRU00159"/>
    </source>
</evidence>
<evidence type="ECO:0000256" key="2">
    <source>
        <dbReference type="SAM" id="MobiDB-lite"/>
    </source>
</evidence>
<evidence type="ECO:0000269" key="3">
    <source>
    </source>
</evidence>
<evidence type="ECO:0000305" key="4"/>
<evidence type="ECO:0000312" key="5">
    <source>
        <dbReference type="Proteomes" id="UP000001940"/>
    </source>
</evidence>
<evidence type="ECO:0000312" key="6">
    <source>
        <dbReference type="WormBase" id="E02H4.3a"/>
    </source>
</evidence>
<evidence type="ECO:0000312" key="7">
    <source>
        <dbReference type="WormBase" id="E02H4.3b"/>
    </source>
</evidence>
<proteinExistence type="evidence at protein level"/>
<sequence>MPILHQKIASTGGQPSTNSLALRRLPLVVIPRKRKYKNYVSRRRNTQLLASLRRCVSDPNVYKSYNHWKALLRPMTPIKSGAPTPKTVTPMPVPQIPPHQKMTPNPTPTQNPVQLPLPHAVSEKPGDKKSTGPTPSPVPSKAPISAAKLPGTVTKVAPLLSAAQPPPKTLAPAPGASETNSGSGPVSKQVSGKLTELKSKNGTVTEKTEKAVLRIPSSASTRAKAASAVAPEANPAPVPTATKPSPFAPAIAPLRDGAPAQPPAPIQASAPLRPPVAKQNSLQKPPEPKRSVGAPPKALPSELVNKIDGIEFLPQSSNQNTDDGQQPTTSTGGAKALRRAYGSKSGTTICAIGSPNVPSTSQPQQGDNEKRLIEKKLSLRKKKLSGEGVPPAGSMLTGSKSGVEIGLSSNLTTTNNNNNKEQTDEQRAKKTVNAVAAAFSTQAGSGNATTVDDPASTTTSKENPAAQPPKPKSAAVQNLISQLQLPASVSAKVDKIIACGDKARKPSRSGLQASQARPKVPEIVSSQRTQHQDDKDGHLIYSKGDFILNRFTIYDTLGEGTFGKVVRVNDSLSDTFMALKIIKNVSKYREAAKLEVKVLQKLAEKDPEKKNWVIHMGSYFDYNGHICLLFDLMGSSIFDFLKANHYKPYPMEQTLHITWQLCNAVKFLHDNKLTHTDLKPENILFVDSRYTTKLVDKKPLRVLHSTHVRLIDFGSATFDHEHHSIIVSTRHYRAPEVILELGWSQPCDVWSIGCILYELYTGVTLFQTHENREHLAMMERVLGDIPLRMAKRTKTKFFINGRLDWVNTSADAAYVRDNCKPLRRSMSCTDPEHVELFELIENMLMFEPLARMKLPEALQHRYFNRLPENLKIPCKMDASTNPRINGD</sequence>
<dbReference type="EC" id="2.7.11.-" evidence="1"/>
<dbReference type="EMBL" id="BX284606">
    <property type="protein sequence ID" value="CAA91979.2"/>
    <property type="molecule type" value="Genomic_DNA"/>
</dbReference>
<dbReference type="EMBL" id="BX284606">
    <property type="protein sequence ID" value="CAD44105.1"/>
    <property type="molecule type" value="Genomic_DNA"/>
</dbReference>
<dbReference type="PIR" id="T19209">
    <property type="entry name" value="T19209"/>
</dbReference>
<dbReference type="RefSeq" id="NP_741927.1">
    <property type="nucleotide sequence ID" value="NM_171798.1"/>
</dbReference>
<dbReference type="RefSeq" id="NP_741928.1">
    <molecule id="G5EDB2-1"/>
    <property type="nucleotide sequence ID" value="NM_171799.8"/>
</dbReference>
<dbReference type="SMR" id="G5EDB2"/>
<dbReference type="FunCoup" id="G5EDB2">
    <property type="interactions" value="856"/>
</dbReference>
<dbReference type="STRING" id="6239.E02H4.3e.1"/>
<dbReference type="PaxDb" id="6239-E02H4.3a"/>
<dbReference type="PeptideAtlas" id="G5EDB2"/>
<dbReference type="EnsemblMetazoa" id="E02H4.3a.1">
    <molecule id="G5EDB2-1"/>
    <property type="protein sequence ID" value="E02H4.3a.1"/>
    <property type="gene ID" value="WBGene00006517"/>
</dbReference>
<dbReference type="EnsemblMetazoa" id="E02H4.3b.1">
    <property type="protein sequence ID" value="E02H4.3b.1"/>
    <property type="gene ID" value="WBGene00006517"/>
</dbReference>
<dbReference type="GeneID" id="3565068"/>
<dbReference type="KEGG" id="cel:CELE_E02H4.3"/>
<dbReference type="AGR" id="WB:WBGene00006517"/>
<dbReference type="CTD" id="3565068"/>
<dbReference type="WormBase" id="E02H4.3a">
    <molecule id="G5EDB2-1"/>
    <property type="protein sequence ID" value="CE31462"/>
    <property type="gene ID" value="WBGene00006517"/>
    <property type="gene designation" value="madd-3"/>
</dbReference>
<dbReference type="WormBase" id="E02H4.3b">
    <molecule id="G5EDB2-2"/>
    <property type="protein sequence ID" value="CE52798"/>
    <property type="gene ID" value="WBGene00006517"/>
    <property type="gene designation" value="madd-3"/>
</dbReference>
<dbReference type="eggNOG" id="KOG0671">
    <property type="taxonomic scope" value="Eukaryota"/>
</dbReference>
<dbReference type="GeneTree" id="ENSGT00940000154947"/>
<dbReference type="HOGENOM" id="CLU_004425_0_0_1"/>
<dbReference type="InParanoid" id="G5EDB2"/>
<dbReference type="OMA" id="NESNYTE"/>
<dbReference type="OrthoDB" id="283111at2759"/>
<dbReference type="PRO" id="PR:G5EDB2"/>
<dbReference type="Proteomes" id="UP000001940">
    <property type="component" value="Chromosome X"/>
</dbReference>
<dbReference type="Bgee" id="WBGene00006517">
    <property type="expression patterns" value="Expressed in embryo and 4 other cell types or tissues"/>
</dbReference>
<dbReference type="ExpressionAtlas" id="G5EDB2">
    <property type="expression patterns" value="baseline and differential"/>
</dbReference>
<dbReference type="GO" id="GO:0005737">
    <property type="term" value="C:cytoplasm"/>
    <property type="evidence" value="ECO:0007669"/>
    <property type="project" value="UniProtKB-SubCell"/>
</dbReference>
<dbReference type="GO" id="GO:0005634">
    <property type="term" value="C:nucleus"/>
    <property type="evidence" value="ECO:0000318"/>
    <property type="project" value="GO_Central"/>
</dbReference>
<dbReference type="GO" id="GO:0005524">
    <property type="term" value="F:ATP binding"/>
    <property type="evidence" value="ECO:0007669"/>
    <property type="project" value="UniProtKB-KW"/>
</dbReference>
<dbReference type="GO" id="GO:0004674">
    <property type="term" value="F:protein serine/threonine kinase activity"/>
    <property type="evidence" value="ECO:0000318"/>
    <property type="project" value="GO_Central"/>
</dbReference>
<dbReference type="GO" id="GO:0004713">
    <property type="term" value="F:protein tyrosine kinase activity"/>
    <property type="evidence" value="ECO:0007669"/>
    <property type="project" value="UniProtKB-KW"/>
</dbReference>
<dbReference type="GO" id="GO:0043484">
    <property type="term" value="P:regulation of RNA splicing"/>
    <property type="evidence" value="ECO:0000318"/>
    <property type="project" value="GO_Central"/>
</dbReference>
<dbReference type="CDD" id="cd14134">
    <property type="entry name" value="PKc_CLK"/>
    <property type="match status" value="1"/>
</dbReference>
<dbReference type="Gene3D" id="3.30.200.20">
    <property type="entry name" value="Phosphorylase Kinase, domain 1"/>
    <property type="match status" value="1"/>
</dbReference>
<dbReference type="Gene3D" id="1.10.510.10">
    <property type="entry name" value="Transferase(Phosphotransferase) domain 1"/>
    <property type="match status" value="1"/>
</dbReference>
<dbReference type="InterPro" id="IPR051175">
    <property type="entry name" value="CLK_kinases"/>
</dbReference>
<dbReference type="InterPro" id="IPR011009">
    <property type="entry name" value="Kinase-like_dom_sf"/>
</dbReference>
<dbReference type="InterPro" id="IPR000719">
    <property type="entry name" value="Prot_kinase_dom"/>
</dbReference>
<dbReference type="InterPro" id="IPR017441">
    <property type="entry name" value="Protein_kinase_ATP_BS"/>
</dbReference>
<dbReference type="InterPro" id="IPR008271">
    <property type="entry name" value="Ser/Thr_kinase_AS"/>
</dbReference>
<dbReference type="PANTHER" id="PTHR45646">
    <property type="entry name" value="SERINE/THREONINE-PROTEIN KINASE DOA-RELATED"/>
    <property type="match status" value="1"/>
</dbReference>
<dbReference type="PANTHER" id="PTHR45646:SF11">
    <property type="entry name" value="SERINE_THREONINE-PROTEIN KINASE DOA"/>
    <property type="match status" value="1"/>
</dbReference>
<dbReference type="Pfam" id="PF00069">
    <property type="entry name" value="Pkinase"/>
    <property type="match status" value="1"/>
</dbReference>
<dbReference type="SMART" id="SM00220">
    <property type="entry name" value="S_TKc"/>
    <property type="match status" value="1"/>
</dbReference>
<dbReference type="SUPFAM" id="SSF56112">
    <property type="entry name" value="Protein kinase-like (PK-like)"/>
    <property type="match status" value="1"/>
</dbReference>
<dbReference type="PROSITE" id="PS00107">
    <property type="entry name" value="PROTEIN_KINASE_ATP"/>
    <property type="match status" value="1"/>
</dbReference>
<dbReference type="PROSITE" id="PS50011">
    <property type="entry name" value="PROTEIN_KINASE_DOM"/>
    <property type="match status" value="1"/>
</dbReference>
<dbReference type="PROSITE" id="PS00108">
    <property type="entry name" value="PROTEIN_KINASE_ST"/>
    <property type="match status" value="1"/>
</dbReference>
<comment type="function">
    <molecule>Isoform a</molecule>
    <text evidence="3">Probable dual specificity kinase acting on both serine/threonine and tyrosine-containing substrates. Negatively regulates p38 MAPK signaling to allow for the plasma membrane of body wall muscle cells to form projections, also called muscle arms, that extend and connect the body wall muscles to target motor neurons. Negative regulation of p38 MAPK signaling may in turn modulate the trafficking of the muscle specific receptor eva-1 to the lysosome, to ensure proper display of the eva-1 receptor on the plasma membrane of muscle cells and allow for muscle arm extension towards guidance cues.</text>
</comment>
<comment type="subcellular location">
    <molecule>Isoform a</molecule>
    <subcellularLocation>
        <location evidence="3">Cytoplasm</location>
    </subcellularLocation>
    <subcellularLocation>
        <location evidence="3">Nucleus</location>
    </subcellularLocation>
    <text evidence="3">Enriched in the cytoplasm.</text>
</comment>
<comment type="alternative products">
    <event type="alternative splicing"/>
    <isoform>
        <id>G5EDB2-1</id>
        <name evidence="6">a</name>
        <sequence type="displayed"/>
    </isoform>
    <isoform>
        <id>G5EDB2-2</id>
        <name evidence="7">b</name>
        <sequence type="described" ref="VSP_059228"/>
    </isoform>
</comment>
<comment type="tissue specificity">
    <molecule>Isoform a</molecule>
    <text evidence="3">Expressed in body wall, vulval and anal depressor muscles.</text>
</comment>
<comment type="developmental stage">
    <molecule>Isoform a</molecule>
    <text evidence="3">Expressed from embryogenesis to adulthood.</text>
</comment>
<comment type="disruption phenotype">
    <text evidence="3">Viable, but sterile. Defective extension of body wall muscle connections or arms towards the ventral nerve cord. Reduced expression of the late endosome marker rab-7, and the eva-1 and unc-40 receptors, which are expressed in muscles, and impaired recruitment of madd-4 to the muscle membrane. Double knockout with cup-5 results in increased expression of the eva-1 receptor and rab-7 positive endosomes. Double knockout with eva-1, gex-2, madd-2, madd-4, mkk-4, unc-15, unc-60, unc-93 or unc-98 results in severe muscle arm extension defects as compared to the single knockouts. Double knockout with proteins involved in the p38 MAPK signaling pathway including cebp-1, mak-2, pmk-3 or sek-3 suppress the muscle arm extension defects and eva-1 expression defects in the madd-3 single knockout. Double knockout with dlk-1 also suppresses the eva-1 expression defect, but does not suppress the muscle arm extension defects in the madd-3 single knockout. Double knockout with cebp-1, mak-2 or pmk-3 restores the defect in the recruitment of madd-4 to the muscle membrane in the madd-3 single knockout. Furthermore, double knockout with pmk-3 restores the reduced rab-7 expression level defect in the madd-3 single knockout. Double knockout with unc-54 results in lethality. Triple knockout with unc-54, and either cebp-1, dlk-1, mak-2, pmk-3 or sek-3 results in paralysis (as in the unc-54 single knockout), and suppresses the lethality phenotype in the double madd-3 and unc-54 mutant.</text>
</comment>
<comment type="similarity">
    <text evidence="4">Belongs to the protein kinase superfamily. CMGC Ser/Thr protein kinase family. Lammer subfamily.</text>
</comment>
<feature type="chain" id="PRO_0000442342" description="Probable dual specificity protein kinase madd-3" evidence="4">
    <location>
        <begin position="1"/>
        <end position="887"/>
    </location>
</feature>
<feature type="domain" description="Protein kinase" evidence="1">
    <location>
        <begin position="551"/>
        <end position="863"/>
    </location>
</feature>
<feature type="region of interest" description="Disordered" evidence="2">
    <location>
        <begin position="77"/>
        <end position="147"/>
    </location>
</feature>
<feature type="region of interest" description="Disordered" evidence="2">
    <location>
        <begin position="163"/>
        <end position="299"/>
    </location>
</feature>
<feature type="region of interest" description="Disordered" evidence="2">
    <location>
        <begin position="313"/>
        <end position="333"/>
    </location>
</feature>
<feature type="region of interest" description="Disordered" evidence="2">
    <location>
        <begin position="347"/>
        <end position="475"/>
    </location>
</feature>
<feature type="region of interest" description="Disordered" evidence="2">
    <location>
        <begin position="504"/>
        <end position="533"/>
    </location>
</feature>
<feature type="compositionally biased region" description="Low complexity" evidence="2">
    <location>
        <begin position="108"/>
        <end position="118"/>
    </location>
</feature>
<feature type="compositionally biased region" description="Basic and acidic residues" evidence="2">
    <location>
        <begin position="121"/>
        <end position="130"/>
    </location>
</feature>
<feature type="compositionally biased region" description="Polar residues" evidence="2">
    <location>
        <begin position="177"/>
        <end position="192"/>
    </location>
</feature>
<feature type="compositionally biased region" description="Low complexity" evidence="2">
    <location>
        <begin position="217"/>
        <end position="241"/>
    </location>
</feature>
<feature type="compositionally biased region" description="Polar residues" evidence="2">
    <location>
        <begin position="314"/>
        <end position="332"/>
    </location>
</feature>
<feature type="compositionally biased region" description="Polar residues" evidence="2">
    <location>
        <begin position="356"/>
        <end position="366"/>
    </location>
</feature>
<feature type="compositionally biased region" description="Basic and acidic residues" evidence="2">
    <location>
        <begin position="367"/>
        <end position="377"/>
    </location>
</feature>
<feature type="compositionally biased region" description="Low complexity" evidence="2">
    <location>
        <begin position="407"/>
        <end position="419"/>
    </location>
</feature>
<feature type="compositionally biased region" description="Polar residues" evidence="2">
    <location>
        <begin position="439"/>
        <end position="462"/>
    </location>
</feature>
<feature type="active site" description="Proton acceptor" evidence="1">
    <location>
        <position position="677"/>
    </location>
</feature>
<feature type="binding site" evidence="1">
    <location>
        <begin position="557"/>
        <end position="565"/>
    </location>
    <ligand>
        <name>ATP</name>
        <dbReference type="ChEBI" id="CHEBI:30616"/>
    </ligand>
</feature>
<feature type="binding site" evidence="4">
    <location>
        <position position="580"/>
    </location>
    <ligand>
        <name>ATP</name>
        <dbReference type="ChEBI" id="CHEBI:30616"/>
    </ligand>
</feature>
<feature type="splice variant" id="VSP_059228" description="In isoform b." evidence="4">
    <original>MPILHQKIASTGGQPSTNSLALRRLPLVVIPRKRKYKNYVSRRRNTQLLASLRRCVSDPNVYKSYNHWKALLRPMTPIKSGAPTPKTVTPMPVPQIPPHQKMTPNPTPTQNPVQLPLPHAVSEKPGDKKSTGPTPSPVPSKAPISAAKLPGTVTKVAPLLSAAQPPPKTLAPAPGASETNSGSGPVSKQVSGKLTELKSKNGTVTEKTEKAVLRIPSSASTRAKAASAVAPEANPAPVPTATKPSPFAPAIAPLRDGAPAQPPAPIQASAPLRPPVAKQNSLQKPPEPKRSVGAPPKALPSELVNKIDGIEFLPQSSNQNTDDGQQPTTSTGGAKALRRAYGSKSGTTICAIGSPNVPSTSQPQQGDNEKRLIEKKLSLRKKKLSGEGVPPAGSMLTGSKSGVEIGLSSNLTTTNNNNNKEQTDEQRAKKTVNAVAAAFSTQAGSGNATTVDDPASTTTSKENPAAQPPKPKSAAVQNLISQLQLPASVSAKVDKIIACGDKARKPSRSGLQ</original>
    <variation>MIANSKTIKIVNKKQAAISRPRVPIVPHQRTPIP</variation>
    <location>
        <begin position="1"/>
        <end position="512"/>
    </location>
</feature>
<feature type="mutagenesis site" description="Kinase dead. Defective extension of muscle arms towards motor neuron targets." evidence="3">
    <original>K</original>
    <variation>R</variation>
    <location>
        <position position="580"/>
    </location>
</feature>